<name>BIOD_MYCSJ</name>
<comment type="function">
    <text evidence="1">Catalyzes a mechanistically unusual reaction, the ATP-dependent insertion of CO2 between the N7 and N8 nitrogen atoms of 7,8-diaminopelargonic acid (DAPA, also called 7,8-diammoniononanoate) to form a ureido ring.</text>
</comment>
<comment type="catalytic activity">
    <reaction evidence="1">
        <text>(7R,8S)-7,8-diammoniononanoate + CO2 + ATP = (4R,5S)-dethiobiotin + ADP + phosphate + 3 H(+)</text>
        <dbReference type="Rhea" id="RHEA:15805"/>
        <dbReference type="ChEBI" id="CHEBI:15378"/>
        <dbReference type="ChEBI" id="CHEBI:16526"/>
        <dbReference type="ChEBI" id="CHEBI:30616"/>
        <dbReference type="ChEBI" id="CHEBI:43474"/>
        <dbReference type="ChEBI" id="CHEBI:149469"/>
        <dbReference type="ChEBI" id="CHEBI:149473"/>
        <dbReference type="ChEBI" id="CHEBI:456216"/>
        <dbReference type="EC" id="6.3.3.3"/>
    </reaction>
</comment>
<comment type="cofactor">
    <cofactor evidence="1">
        <name>Mg(2+)</name>
        <dbReference type="ChEBI" id="CHEBI:18420"/>
    </cofactor>
</comment>
<comment type="pathway">
    <text evidence="1">Cofactor biosynthesis; biotin biosynthesis; biotin from 7,8-diaminononanoate: step 1/2.</text>
</comment>
<comment type="subunit">
    <text evidence="1">Homodimer.</text>
</comment>
<comment type="subcellular location">
    <subcellularLocation>
        <location evidence="1">Cytoplasm</location>
    </subcellularLocation>
</comment>
<comment type="similarity">
    <text evidence="1">Belongs to the dethiobiotin synthetase family.</text>
</comment>
<gene>
    <name evidence="1" type="primary">bioD</name>
    <name type="ordered locus">Mjls_3093</name>
</gene>
<accession>A3Q145</accession>
<reference key="1">
    <citation type="submission" date="2007-02" db="EMBL/GenBank/DDBJ databases">
        <title>Complete sequence of Mycobacterium sp. JLS.</title>
        <authorList>
            <consortium name="US DOE Joint Genome Institute"/>
            <person name="Copeland A."/>
            <person name="Lucas S."/>
            <person name="Lapidus A."/>
            <person name="Barry K."/>
            <person name="Detter J.C."/>
            <person name="Glavina del Rio T."/>
            <person name="Hammon N."/>
            <person name="Israni S."/>
            <person name="Dalin E."/>
            <person name="Tice H."/>
            <person name="Pitluck S."/>
            <person name="Chain P."/>
            <person name="Malfatti S."/>
            <person name="Shin M."/>
            <person name="Vergez L."/>
            <person name="Schmutz J."/>
            <person name="Larimer F."/>
            <person name="Land M."/>
            <person name="Hauser L."/>
            <person name="Kyrpides N."/>
            <person name="Mikhailova N."/>
            <person name="Miller C.D."/>
            <person name="Anderson A.J."/>
            <person name="Sims R.C."/>
            <person name="Richardson P."/>
        </authorList>
    </citation>
    <scope>NUCLEOTIDE SEQUENCE [LARGE SCALE GENOMIC DNA]</scope>
    <source>
        <strain>JLS</strain>
    </source>
</reference>
<feature type="chain" id="PRO_0000302526" description="ATP-dependent dethiobiotin synthetase BioD">
    <location>
        <begin position="1"/>
        <end position="229"/>
    </location>
</feature>
<feature type="active site" evidence="1">
    <location>
        <position position="37"/>
    </location>
</feature>
<feature type="binding site" evidence="1">
    <location>
        <begin position="12"/>
        <end position="17"/>
    </location>
    <ligand>
        <name>ATP</name>
        <dbReference type="ChEBI" id="CHEBI:30616"/>
    </ligand>
</feature>
<feature type="binding site" evidence="1">
    <location>
        <position position="16"/>
    </location>
    <ligand>
        <name>Mg(2+)</name>
        <dbReference type="ChEBI" id="CHEBI:18420"/>
    </ligand>
</feature>
<feature type="binding site" evidence="1">
    <location>
        <position position="41"/>
    </location>
    <ligand>
        <name>substrate</name>
    </ligand>
</feature>
<feature type="binding site" evidence="1">
    <location>
        <position position="53"/>
    </location>
    <ligand>
        <name>ATP</name>
        <dbReference type="ChEBI" id="CHEBI:30616"/>
    </ligand>
</feature>
<feature type="binding site" evidence="1">
    <location>
        <position position="53"/>
    </location>
    <ligand>
        <name>Mg(2+)</name>
        <dbReference type="ChEBI" id="CHEBI:18420"/>
    </ligand>
</feature>
<feature type="binding site" evidence="1">
    <location>
        <begin position="112"/>
        <end position="115"/>
    </location>
    <ligand>
        <name>ATP</name>
        <dbReference type="ChEBI" id="CHEBI:30616"/>
    </ligand>
</feature>
<feature type="binding site" evidence="1">
    <location>
        <position position="112"/>
    </location>
    <ligand>
        <name>Mg(2+)</name>
        <dbReference type="ChEBI" id="CHEBI:18420"/>
    </ligand>
</feature>
<feature type="binding site" evidence="1">
    <location>
        <begin position="201"/>
        <end position="203"/>
    </location>
    <ligand>
        <name>ATP</name>
        <dbReference type="ChEBI" id="CHEBI:30616"/>
    </ligand>
</feature>
<keyword id="KW-0067">ATP-binding</keyword>
<keyword id="KW-0093">Biotin biosynthesis</keyword>
<keyword id="KW-0963">Cytoplasm</keyword>
<keyword id="KW-0436">Ligase</keyword>
<keyword id="KW-0460">Magnesium</keyword>
<keyword id="KW-0479">Metal-binding</keyword>
<keyword id="KW-0547">Nucleotide-binding</keyword>
<evidence type="ECO:0000255" key="1">
    <source>
        <dbReference type="HAMAP-Rule" id="MF_00336"/>
    </source>
</evidence>
<dbReference type="EC" id="6.3.3.3" evidence="1"/>
<dbReference type="EMBL" id="CP000580">
    <property type="protein sequence ID" value="ABN98872.1"/>
    <property type="molecule type" value="Genomic_DNA"/>
</dbReference>
<dbReference type="SMR" id="A3Q145"/>
<dbReference type="KEGG" id="mjl:Mjls_3093"/>
<dbReference type="HOGENOM" id="CLU_072551_1_0_11"/>
<dbReference type="BioCyc" id="MSP164757:G1G8C-3118-MONOMER"/>
<dbReference type="UniPathway" id="UPA00078">
    <property type="reaction ID" value="UER00161"/>
</dbReference>
<dbReference type="GO" id="GO:0005829">
    <property type="term" value="C:cytosol"/>
    <property type="evidence" value="ECO:0007669"/>
    <property type="project" value="TreeGrafter"/>
</dbReference>
<dbReference type="GO" id="GO:0005524">
    <property type="term" value="F:ATP binding"/>
    <property type="evidence" value="ECO:0007669"/>
    <property type="project" value="UniProtKB-UniRule"/>
</dbReference>
<dbReference type="GO" id="GO:0004141">
    <property type="term" value="F:dethiobiotin synthase activity"/>
    <property type="evidence" value="ECO:0007669"/>
    <property type="project" value="UniProtKB-UniRule"/>
</dbReference>
<dbReference type="GO" id="GO:0000287">
    <property type="term" value="F:magnesium ion binding"/>
    <property type="evidence" value="ECO:0007669"/>
    <property type="project" value="UniProtKB-UniRule"/>
</dbReference>
<dbReference type="GO" id="GO:0009102">
    <property type="term" value="P:biotin biosynthetic process"/>
    <property type="evidence" value="ECO:0007669"/>
    <property type="project" value="UniProtKB-UniRule"/>
</dbReference>
<dbReference type="CDD" id="cd03109">
    <property type="entry name" value="DTBS"/>
    <property type="match status" value="1"/>
</dbReference>
<dbReference type="Gene3D" id="3.40.50.300">
    <property type="entry name" value="P-loop containing nucleotide triphosphate hydrolases"/>
    <property type="match status" value="1"/>
</dbReference>
<dbReference type="HAMAP" id="MF_00336">
    <property type="entry name" value="BioD"/>
    <property type="match status" value="1"/>
</dbReference>
<dbReference type="InterPro" id="IPR004472">
    <property type="entry name" value="DTB_synth_BioD"/>
</dbReference>
<dbReference type="InterPro" id="IPR027417">
    <property type="entry name" value="P-loop_NTPase"/>
</dbReference>
<dbReference type="NCBIfam" id="TIGR00347">
    <property type="entry name" value="bioD"/>
    <property type="match status" value="1"/>
</dbReference>
<dbReference type="PANTHER" id="PTHR43210">
    <property type="entry name" value="DETHIOBIOTIN SYNTHETASE"/>
    <property type="match status" value="1"/>
</dbReference>
<dbReference type="PANTHER" id="PTHR43210:SF5">
    <property type="entry name" value="DETHIOBIOTIN SYNTHETASE"/>
    <property type="match status" value="1"/>
</dbReference>
<dbReference type="Pfam" id="PF13500">
    <property type="entry name" value="AAA_26"/>
    <property type="match status" value="1"/>
</dbReference>
<dbReference type="PIRSF" id="PIRSF006755">
    <property type="entry name" value="DTB_synth"/>
    <property type="match status" value="1"/>
</dbReference>
<dbReference type="SUPFAM" id="SSF52540">
    <property type="entry name" value="P-loop containing nucleoside triphosphate hydrolases"/>
    <property type="match status" value="1"/>
</dbReference>
<protein>
    <recommendedName>
        <fullName evidence="1">ATP-dependent dethiobiotin synthetase BioD</fullName>
        <ecNumber evidence="1">6.3.3.3</ecNumber>
    </recommendedName>
    <alternativeName>
        <fullName evidence="1">DTB synthetase</fullName>
        <shortName evidence="1">DTBS</shortName>
    </alternativeName>
    <alternativeName>
        <fullName evidence="1">Dethiobiotin synthase</fullName>
    </alternativeName>
</protein>
<sequence length="229" mass="22806">MSVLVITGTDTGVGKTVATAALACAARVAGIDVAVCKPVQTGTGPAGGTGDDDLVEIGRLAGVDALHPGWRYPDPLAPVAAAERAGAALPTRDELIGMIRAADAPGRLTLVEGAGGLLVELGQDAVTLRDVATELAAPVLVVVAPGLGTLNHTALTLESLAAQQVPCAGLVIGAWPAQPGAAEIDNRDALARLAPVRAALPAGVGSVSPVDFERISATAFDPNWLAGLL</sequence>
<organism>
    <name type="scientific">Mycobacterium sp. (strain JLS)</name>
    <dbReference type="NCBI Taxonomy" id="164757"/>
    <lineage>
        <taxon>Bacteria</taxon>
        <taxon>Bacillati</taxon>
        <taxon>Actinomycetota</taxon>
        <taxon>Actinomycetes</taxon>
        <taxon>Mycobacteriales</taxon>
        <taxon>Mycobacteriaceae</taxon>
        <taxon>Mycobacterium</taxon>
    </lineage>
</organism>
<proteinExistence type="inferred from homology"/>